<protein>
    <recommendedName>
        <fullName evidence="1">Chaperone protein DnaJ</fullName>
    </recommendedName>
</protein>
<evidence type="ECO:0000255" key="1">
    <source>
        <dbReference type="HAMAP-Rule" id="MF_01152"/>
    </source>
</evidence>
<proteinExistence type="inferred from homology"/>
<feature type="chain" id="PRO_1000085185" description="Chaperone protein DnaJ">
    <location>
        <begin position="1"/>
        <end position="374"/>
    </location>
</feature>
<feature type="domain" description="J" evidence="1">
    <location>
        <begin position="5"/>
        <end position="71"/>
    </location>
</feature>
<feature type="repeat" description="CXXCXGXG motif">
    <location>
        <begin position="145"/>
        <end position="152"/>
    </location>
</feature>
<feature type="repeat" description="CXXCXGXG motif">
    <location>
        <begin position="162"/>
        <end position="169"/>
    </location>
</feature>
<feature type="repeat" description="CXXCXGXG motif">
    <location>
        <begin position="184"/>
        <end position="191"/>
    </location>
</feature>
<feature type="repeat" description="CXXCXGXG motif">
    <location>
        <begin position="198"/>
        <end position="205"/>
    </location>
</feature>
<feature type="zinc finger region" description="CR-type" evidence="1">
    <location>
        <begin position="132"/>
        <end position="210"/>
    </location>
</feature>
<feature type="binding site" evidence="1">
    <location>
        <position position="145"/>
    </location>
    <ligand>
        <name>Zn(2+)</name>
        <dbReference type="ChEBI" id="CHEBI:29105"/>
        <label>1</label>
    </ligand>
</feature>
<feature type="binding site" evidence="1">
    <location>
        <position position="148"/>
    </location>
    <ligand>
        <name>Zn(2+)</name>
        <dbReference type="ChEBI" id="CHEBI:29105"/>
        <label>1</label>
    </ligand>
</feature>
<feature type="binding site" evidence="1">
    <location>
        <position position="162"/>
    </location>
    <ligand>
        <name>Zn(2+)</name>
        <dbReference type="ChEBI" id="CHEBI:29105"/>
        <label>2</label>
    </ligand>
</feature>
<feature type="binding site" evidence="1">
    <location>
        <position position="165"/>
    </location>
    <ligand>
        <name>Zn(2+)</name>
        <dbReference type="ChEBI" id="CHEBI:29105"/>
        <label>2</label>
    </ligand>
</feature>
<feature type="binding site" evidence="1">
    <location>
        <position position="184"/>
    </location>
    <ligand>
        <name>Zn(2+)</name>
        <dbReference type="ChEBI" id="CHEBI:29105"/>
        <label>2</label>
    </ligand>
</feature>
<feature type="binding site" evidence="1">
    <location>
        <position position="187"/>
    </location>
    <ligand>
        <name>Zn(2+)</name>
        <dbReference type="ChEBI" id="CHEBI:29105"/>
        <label>2</label>
    </ligand>
</feature>
<feature type="binding site" evidence="1">
    <location>
        <position position="198"/>
    </location>
    <ligand>
        <name>Zn(2+)</name>
        <dbReference type="ChEBI" id="CHEBI:29105"/>
        <label>1</label>
    </ligand>
</feature>
<feature type="binding site" evidence="1">
    <location>
        <position position="201"/>
    </location>
    <ligand>
        <name>Zn(2+)</name>
        <dbReference type="ChEBI" id="CHEBI:29105"/>
        <label>1</label>
    </ligand>
</feature>
<keyword id="KW-0143">Chaperone</keyword>
<keyword id="KW-0963">Cytoplasm</keyword>
<keyword id="KW-0235">DNA replication</keyword>
<keyword id="KW-0479">Metal-binding</keyword>
<keyword id="KW-1185">Reference proteome</keyword>
<keyword id="KW-0677">Repeat</keyword>
<keyword id="KW-0346">Stress response</keyword>
<keyword id="KW-0862">Zinc</keyword>
<keyword id="KW-0863">Zinc-finger</keyword>
<dbReference type="EMBL" id="CP000513">
    <property type="protein sequence ID" value="ABQ13918.1"/>
    <property type="molecule type" value="Genomic_DNA"/>
</dbReference>
<dbReference type="RefSeq" id="WP_012031150.1">
    <property type="nucleotide sequence ID" value="NC_009446.1"/>
</dbReference>
<dbReference type="SMR" id="A5EYE5"/>
<dbReference type="STRING" id="246195.DNO_0827"/>
<dbReference type="KEGG" id="dno:DNO_0827"/>
<dbReference type="eggNOG" id="COG0484">
    <property type="taxonomic scope" value="Bacteria"/>
</dbReference>
<dbReference type="HOGENOM" id="CLU_017633_0_7_6"/>
<dbReference type="OrthoDB" id="9779889at2"/>
<dbReference type="Proteomes" id="UP000000248">
    <property type="component" value="Chromosome"/>
</dbReference>
<dbReference type="GO" id="GO:0005737">
    <property type="term" value="C:cytoplasm"/>
    <property type="evidence" value="ECO:0007669"/>
    <property type="project" value="UniProtKB-SubCell"/>
</dbReference>
<dbReference type="GO" id="GO:0005524">
    <property type="term" value="F:ATP binding"/>
    <property type="evidence" value="ECO:0007669"/>
    <property type="project" value="InterPro"/>
</dbReference>
<dbReference type="GO" id="GO:0031072">
    <property type="term" value="F:heat shock protein binding"/>
    <property type="evidence" value="ECO:0007669"/>
    <property type="project" value="InterPro"/>
</dbReference>
<dbReference type="GO" id="GO:0051082">
    <property type="term" value="F:unfolded protein binding"/>
    <property type="evidence" value="ECO:0007669"/>
    <property type="project" value="UniProtKB-UniRule"/>
</dbReference>
<dbReference type="GO" id="GO:0008270">
    <property type="term" value="F:zinc ion binding"/>
    <property type="evidence" value="ECO:0007669"/>
    <property type="project" value="UniProtKB-UniRule"/>
</dbReference>
<dbReference type="GO" id="GO:0051085">
    <property type="term" value="P:chaperone cofactor-dependent protein refolding"/>
    <property type="evidence" value="ECO:0007669"/>
    <property type="project" value="TreeGrafter"/>
</dbReference>
<dbReference type="GO" id="GO:0006260">
    <property type="term" value="P:DNA replication"/>
    <property type="evidence" value="ECO:0007669"/>
    <property type="project" value="UniProtKB-KW"/>
</dbReference>
<dbReference type="GO" id="GO:0042026">
    <property type="term" value="P:protein refolding"/>
    <property type="evidence" value="ECO:0007669"/>
    <property type="project" value="TreeGrafter"/>
</dbReference>
<dbReference type="GO" id="GO:0009408">
    <property type="term" value="P:response to heat"/>
    <property type="evidence" value="ECO:0007669"/>
    <property type="project" value="InterPro"/>
</dbReference>
<dbReference type="CDD" id="cd06257">
    <property type="entry name" value="DnaJ"/>
    <property type="match status" value="1"/>
</dbReference>
<dbReference type="CDD" id="cd10747">
    <property type="entry name" value="DnaJ_C"/>
    <property type="match status" value="1"/>
</dbReference>
<dbReference type="CDD" id="cd10719">
    <property type="entry name" value="DnaJ_zf"/>
    <property type="match status" value="1"/>
</dbReference>
<dbReference type="FunFam" id="1.10.287.110:FF:000034">
    <property type="entry name" value="Chaperone protein DnaJ"/>
    <property type="match status" value="1"/>
</dbReference>
<dbReference type="FunFam" id="2.10.230.10:FF:000002">
    <property type="entry name" value="Molecular chaperone DnaJ"/>
    <property type="match status" value="1"/>
</dbReference>
<dbReference type="FunFam" id="2.60.260.20:FF:000004">
    <property type="entry name" value="Molecular chaperone DnaJ"/>
    <property type="match status" value="1"/>
</dbReference>
<dbReference type="Gene3D" id="1.10.287.110">
    <property type="entry name" value="DnaJ domain"/>
    <property type="match status" value="1"/>
</dbReference>
<dbReference type="Gene3D" id="2.10.230.10">
    <property type="entry name" value="Heat shock protein DnaJ, cysteine-rich domain"/>
    <property type="match status" value="1"/>
</dbReference>
<dbReference type="Gene3D" id="2.60.260.20">
    <property type="entry name" value="Urease metallochaperone UreE, N-terminal domain"/>
    <property type="match status" value="2"/>
</dbReference>
<dbReference type="HAMAP" id="MF_01152">
    <property type="entry name" value="DnaJ"/>
    <property type="match status" value="1"/>
</dbReference>
<dbReference type="InterPro" id="IPR012724">
    <property type="entry name" value="DnaJ"/>
</dbReference>
<dbReference type="InterPro" id="IPR002939">
    <property type="entry name" value="DnaJ_C"/>
</dbReference>
<dbReference type="InterPro" id="IPR001623">
    <property type="entry name" value="DnaJ_domain"/>
</dbReference>
<dbReference type="InterPro" id="IPR018253">
    <property type="entry name" value="DnaJ_domain_CS"/>
</dbReference>
<dbReference type="InterPro" id="IPR008971">
    <property type="entry name" value="HSP40/DnaJ_pept-bd"/>
</dbReference>
<dbReference type="InterPro" id="IPR001305">
    <property type="entry name" value="HSP_DnaJ_Cys-rich_dom"/>
</dbReference>
<dbReference type="InterPro" id="IPR036410">
    <property type="entry name" value="HSP_DnaJ_Cys-rich_dom_sf"/>
</dbReference>
<dbReference type="InterPro" id="IPR036869">
    <property type="entry name" value="J_dom_sf"/>
</dbReference>
<dbReference type="NCBIfam" id="TIGR02349">
    <property type="entry name" value="DnaJ_bact"/>
    <property type="match status" value="1"/>
</dbReference>
<dbReference type="NCBIfam" id="NF008035">
    <property type="entry name" value="PRK10767.1"/>
    <property type="match status" value="1"/>
</dbReference>
<dbReference type="PANTHER" id="PTHR43096:SF48">
    <property type="entry name" value="CHAPERONE PROTEIN DNAJ"/>
    <property type="match status" value="1"/>
</dbReference>
<dbReference type="PANTHER" id="PTHR43096">
    <property type="entry name" value="DNAJ HOMOLOG 1, MITOCHONDRIAL-RELATED"/>
    <property type="match status" value="1"/>
</dbReference>
<dbReference type="Pfam" id="PF00226">
    <property type="entry name" value="DnaJ"/>
    <property type="match status" value="1"/>
</dbReference>
<dbReference type="Pfam" id="PF01556">
    <property type="entry name" value="DnaJ_C"/>
    <property type="match status" value="1"/>
</dbReference>
<dbReference type="Pfam" id="PF00684">
    <property type="entry name" value="DnaJ_CXXCXGXG"/>
    <property type="match status" value="1"/>
</dbReference>
<dbReference type="PRINTS" id="PR00625">
    <property type="entry name" value="JDOMAIN"/>
</dbReference>
<dbReference type="SMART" id="SM00271">
    <property type="entry name" value="DnaJ"/>
    <property type="match status" value="1"/>
</dbReference>
<dbReference type="SUPFAM" id="SSF46565">
    <property type="entry name" value="Chaperone J-domain"/>
    <property type="match status" value="1"/>
</dbReference>
<dbReference type="SUPFAM" id="SSF57938">
    <property type="entry name" value="DnaJ/Hsp40 cysteine-rich domain"/>
    <property type="match status" value="1"/>
</dbReference>
<dbReference type="SUPFAM" id="SSF49493">
    <property type="entry name" value="HSP40/DnaJ peptide-binding domain"/>
    <property type="match status" value="2"/>
</dbReference>
<dbReference type="PROSITE" id="PS00636">
    <property type="entry name" value="DNAJ_1"/>
    <property type="match status" value="1"/>
</dbReference>
<dbReference type="PROSITE" id="PS50076">
    <property type="entry name" value="DNAJ_2"/>
    <property type="match status" value="1"/>
</dbReference>
<dbReference type="PROSITE" id="PS51188">
    <property type="entry name" value="ZF_CR"/>
    <property type="match status" value="1"/>
</dbReference>
<sequence length="374" mass="41046">MADKDLYAILGVCRTANQDEIKKAYRKLSMKWHPDRNPNNKEEAEEKFKEINKAYEILSDSQKRASYDRFGFDAANQGAAGGGFSGGNFSDIFGDVFGDIFGNVRQTNGARQTRGHDLAYKIELSLEEAIHGVEKQIRIATQVRCGECHGSGMNAKSKKKTCPTCNGAGQVRMQQGFFSIAQPCPTCHGRGEIIENPCNKCQGTGRVKDTRVLTVNIPAGVDNGDRIRLSGEGEAGELGAPAGDLYIEIFVRAHPIFERQGNDLYCKMPISFTTACLGGDLEVPTLNGRVKLSIPEETQTGKTFRLKGKGVQSVRSNSVGDLYCTVTIETPINLSKAQKELLMNFEQALNEGGKTHTPQAKGFFDNIKQFFDNL</sequence>
<gene>
    <name evidence="1" type="primary">dnaJ</name>
    <name type="ordered locus">DNO_0827</name>
</gene>
<accession>A5EYE5</accession>
<reference key="1">
    <citation type="journal article" date="2007" name="Nat. Biotechnol.">
        <title>Genome sequence and identification of candidate vaccine antigens from the animal pathogen Dichelobacter nodosus.</title>
        <authorList>
            <person name="Myers G.S.A."/>
            <person name="Parker D."/>
            <person name="Al-Hasani K."/>
            <person name="Kennan R.M."/>
            <person name="Seemann T."/>
            <person name="Ren Q."/>
            <person name="Badger J.H."/>
            <person name="Selengut J.D."/>
            <person name="Deboy R.T."/>
            <person name="Tettelin H."/>
            <person name="Boyce J.D."/>
            <person name="McCarl V.P."/>
            <person name="Han X."/>
            <person name="Nelson W.C."/>
            <person name="Madupu R."/>
            <person name="Mohamoud Y."/>
            <person name="Holley T."/>
            <person name="Fedorova N."/>
            <person name="Khouri H."/>
            <person name="Bottomley S.P."/>
            <person name="Whittington R.J."/>
            <person name="Adler B."/>
            <person name="Songer J.G."/>
            <person name="Rood J.I."/>
            <person name="Paulsen I.T."/>
        </authorList>
    </citation>
    <scope>NUCLEOTIDE SEQUENCE [LARGE SCALE GENOMIC DNA]</scope>
    <source>
        <strain>VCS1703A</strain>
    </source>
</reference>
<comment type="function">
    <text evidence="1">Participates actively in the response to hyperosmotic and heat shock by preventing the aggregation of stress-denatured proteins and by disaggregating proteins, also in an autonomous, DnaK-independent fashion. Unfolded proteins bind initially to DnaJ; upon interaction with the DnaJ-bound protein, DnaK hydrolyzes its bound ATP, resulting in the formation of a stable complex. GrpE releases ADP from DnaK; ATP binding to DnaK triggers the release of the substrate protein, thus completing the reaction cycle. Several rounds of ATP-dependent interactions between DnaJ, DnaK and GrpE are required for fully efficient folding. Also involved, together with DnaK and GrpE, in the DNA replication of plasmids through activation of initiation proteins.</text>
</comment>
<comment type="cofactor">
    <cofactor evidence="1">
        <name>Zn(2+)</name>
        <dbReference type="ChEBI" id="CHEBI:29105"/>
    </cofactor>
    <text evidence="1">Binds 2 Zn(2+) ions per monomer.</text>
</comment>
<comment type="subunit">
    <text evidence="1">Homodimer.</text>
</comment>
<comment type="subcellular location">
    <subcellularLocation>
        <location evidence="1">Cytoplasm</location>
    </subcellularLocation>
</comment>
<comment type="domain">
    <text evidence="1">The J domain is necessary and sufficient to stimulate DnaK ATPase activity. Zinc center 1 plays an important role in the autonomous, DnaK-independent chaperone activity of DnaJ. Zinc center 2 is essential for interaction with DnaK and for DnaJ activity.</text>
</comment>
<comment type="similarity">
    <text evidence="1">Belongs to the DnaJ family.</text>
</comment>
<name>DNAJ_DICNV</name>
<organism>
    <name type="scientific">Dichelobacter nodosus (strain VCS1703A)</name>
    <dbReference type="NCBI Taxonomy" id="246195"/>
    <lineage>
        <taxon>Bacteria</taxon>
        <taxon>Pseudomonadati</taxon>
        <taxon>Pseudomonadota</taxon>
        <taxon>Gammaproteobacteria</taxon>
        <taxon>Cardiobacteriales</taxon>
        <taxon>Cardiobacteriaceae</taxon>
        <taxon>Dichelobacter</taxon>
    </lineage>
</organism>